<comment type="function">
    <text evidence="1">This protein binds specifically to 23S rRNA; its binding is stimulated by other ribosomal proteins, e.g. L4, L17, and L20. It is important during the early stages of 50S assembly. It makes multiple contacts with different domains of the 23S rRNA in the assembled 50S subunit and ribosome (By similarity).</text>
</comment>
<comment type="function">
    <text evidence="1">The globular domain of the protein is located near the polypeptide exit tunnel on the outside of the subunit, while an extended beta-hairpin is found that lines the wall of the exit tunnel in the center of the 70S ribosome.</text>
</comment>
<comment type="subunit">
    <text evidence="1">Part of the 50S ribosomal subunit.</text>
</comment>
<comment type="similarity">
    <text evidence="1">Belongs to the universal ribosomal protein uL22 family.</text>
</comment>
<name>RL22_STAA9</name>
<sequence>MEAKAVARTIRIAPRKVRLVLDLIRGKNAAEAIAILKLTNKASSPVIEKVLMSALANAEHNYDMNTDELVVKEAYANEGPTLKRFRPRAQGRASAINKRTSHITIVVSDGKEEAKEA</sequence>
<gene>
    <name evidence="1" type="primary">rplV</name>
    <name type="ordered locus">SaurJH9_2272</name>
</gene>
<accession>A5IV29</accession>
<organism>
    <name type="scientific">Staphylococcus aureus (strain JH9)</name>
    <dbReference type="NCBI Taxonomy" id="359786"/>
    <lineage>
        <taxon>Bacteria</taxon>
        <taxon>Bacillati</taxon>
        <taxon>Bacillota</taxon>
        <taxon>Bacilli</taxon>
        <taxon>Bacillales</taxon>
        <taxon>Staphylococcaceae</taxon>
        <taxon>Staphylococcus</taxon>
    </lineage>
</organism>
<keyword id="KW-0687">Ribonucleoprotein</keyword>
<keyword id="KW-0689">Ribosomal protein</keyword>
<keyword id="KW-0694">RNA-binding</keyword>
<keyword id="KW-0699">rRNA-binding</keyword>
<proteinExistence type="inferred from homology"/>
<reference key="1">
    <citation type="submission" date="2007-05" db="EMBL/GenBank/DDBJ databases">
        <title>Complete sequence of chromosome of Staphylococcus aureus subsp. aureus JH9.</title>
        <authorList>
            <consortium name="US DOE Joint Genome Institute"/>
            <person name="Copeland A."/>
            <person name="Lucas S."/>
            <person name="Lapidus A."/>
            <person name="Barry K."/>
            <person name="Detter J.C."/>
            <person name="Glavina del Rio T."/>
            <person name="Hammon N."/>
            <person name="Israni S."/>
            <person name="Pitluck S."/>
            <person name="Chain P."/>
            <person name="Malfatti S."/>
            <person name="Shin M."/>
            <person name="Vergez L."/>
            <person name="Schmutz J."/>
            <person name="Larimer F."/>
            <person name="Land M."/>
            <person name="Hauser L."/>
            <person name="Kyrpides N."/>
            <person name="Kim E."/>
            <person name="Tomasz A."/>
            <person name="Richardson P."/>
        </authorList>
    </citation>
    <scope>NUCLEOTIDE SEQUENCE [LARGE SCALE GENOMIC DNA]</scope>
    <source>
        <strain>JH9</strain>
    </source>
</reference>
<protein>
    <recommendedName>
        <fullName evidence="1">Large ribosomal subunit protein uL22</fullName>
    </recommendedName>
    <alternativeName>
        <fullName evidence="2">50S ribosomal protein L22</fullName>
    </alternativeName>
</protein>
<feature type="chain" id="PRO_1000086574" description="Large ribosomal subunit protein uL22">
    <location>
        <begin position="1"/>
        <end position="117"/>
    </location>
</feature>
<evidence type="ECO:0000255" key="1">
    <source>
        <dbReference type="HAMAP-Rule" id="MF_01331"/>
    </source>
</evidence>
<evidence type="ECO:0000305" key="2"/>
<dbReference type="EMBL" id="CP000703">
    <property type="protein sequence ID" value="ABQ50052.1"/>
    <property type="molecule type" value="Genomic_DNA"/>
</dbReference>
<dbReference type="RefSeq" id="WP_000387527.1">
    <property type="nucleotide sequence ID" value="NC_009487.1"/>
</dbReference>
<dbReference type="SMR" id="A5IV29"/>
<dbReference type="GeneID" id="98346557"/>
<dbReference type="KEGG" id="saj:SaurJH9_2272"/>
<dbReference type="HOGENOM" id="CLU_083987_3_3_9"/>
<dbReference type="GO" id="GO:0022625">
    <property type="term" value="C:cytosolic large ribosomal subunit"/>
    <property type="evidence" value="ECO:0007669"/>
    <property type="project" value="TreeGrafter"/>
</dbReference>
<dbReference type="GO" id="GO:0019843">
    <property type="term" value="F:rRNA binding"/>
    <property type="evidence" value="ECO:0007669"/>
    <property type="project" value="UniProtKB-UniRule"/>
</dbReference>
<dbReference type="GO" id="GO:0003735">
    <property type="term" value="F:structural constituent of ribosome"/>
    <property type="evidence" value="ECO:0007669"/>
    <property type="project" value="InterPro"/>
</dbReference>
<dbReference type="GO" id="GO:0006412">
    <property type="term" value="P:translation"/>
    <property type="evidence" value="ECO:0007669"/>
    <property type="project" value="UniProtKB-UniRule"/>
</dbReference>
<dbReference type="CDD" id="cd00336">
    <property type="entry name" value="Ribosomal_L22"/>
    <property type="match status" value="1"/>
</dbReference>
<dbReference type="FunFam" id="3.90.470.10:FF:000001">
    <property type="entry name" value="50S ribosomal protein L22"/>
    <property type="match status" value="1"/>
</dbReference>
<dbReference type="Gene3D" id="3.90.470.10">
    <property type="entry name" value="Ribosomal protein L22/L17"/>
    <property type="match status" value="1"/>
</dbReference>
<dbReference type="HAMAP" id="MF_01331_B">
    <property type="entry name" value="Ribosomal_uL22_B"/>
    <property type="match status" value="1"/>
</dbReference>
<dbReference type="InterPro" id="IPR001063">
    <property type="entry name" value="Ribosomal_uL22"/>
</dbReference>
<dbReference type="InterPro" id="IPR005727">
    <property type="entry name" value="Ribosomal_uL22_bac/chlpt-type"/>
</dbReference>
<dbReference type="InterPro" id="IPR047867">
    <property type="entry name" value="Ribosomal_uL22_bac/org-type"/>
</dbReference>
<dbReference type="InterPro" id="IPR018260">
    <property type="entry name" value="Ribosomal_uL22_CS"/>
</dbReference>
<dbReference type="InterPro" id="IPR036394">
    <property type="entry name" value="Ribosomal_uL22_sf"/>
</dbReference>
<dbReference type="NCBIfam" id="TIGR01044">
    <property type="entry name" value="rplV_bact"/>
    <property type="match status" value="1"/>
</dbReference>
<dbReference type="PANTHER" id="PTHR13501">
    <property type="entry name" value="CHLOROPLAST 50S RIBOSOMAL PROTEIN L22-RELATED"/>
    <property type="match status" value="1"/>
</dbReference>
<dbReference type="PANTHER" id="PTHR13501:SF8">
    <property type="entry name" value="LARGE RIBOSOMAL SUBUNIT PROTEIN UL22M"/>
    <property type="match status" value="1"/>
</dbReference>
<dbReference type="Pfam" id="PF00237">
    <property type="entry name" value="Ribosomal_L22"/>
    <property type="match status" value="1"/>
</dbReference>
<dbReference type="SUPFAM" id="SSF54843">
    <property type="entry name" value="Ribosomal protein L22"/>
    <property type="match status" value="1"/>
</dbReference>
<dbReference type="PROSITE" id="PS00464">
    <property type="entry name" value="RIBOSOMAL_L22"/>
    <property type="match status" value="1"/>
</dbReference>